<dbReference type="EC" id="2.5.1.129" evidence="1"/>
<dbReference type="EMBL" id="AE001439">
    <property type="protein sequence ID" value="AAD06958.1"/>
    <property type="molecule type" value="Genomic_DNA"/>
</dbReference>
<dbReference type="PIR" id="D71814">
    <property type="entry name" value="D71814"/>
</dbReference>
<dbReference type="RefSeq" id="WP_000780089.1">
    <property type="nucleotide sequence ID" value="NZ_CP011330.1"/>
</dbReference>
<dbReference type="SMR" id="Q9ZJE3"/>
<dbReference type="KEGG" id="hpj:jhp_1369"/>
<dbReference type="PATRIC" id="fig|85963.30.peg.1182"/>
<dbReference type="eggNOG" id="COG0163">
    <property type="taxonomic scope" value="Bacteria"/>
</dbReference>
<dbReference type="Proteomes" id="UP000000804">
    <property type="component" value="Chromosome"/>
</dbReference>
<dbReference type="GO" id="GO:0106141">
    <property type="term" value="F:flavin prenyltransferase activity"/>
    <property type="evidence" value="ECO:0007669"/>
    <property type="project" value="UniProtKB-EC"/>
</dbReference>
<dbReference type="FunFam" id="3.40.50.1950:FF:000011">
    <property type="entry name" value="Flavin prenyltransferase UbiX"/>
    <property type="match status" value="1"/>
</dbReference>
<dbReference type="Gene3D" id="3.40.50.1950">
    <property type="entry name" value="Flavin prenyltransferase-like"/>
    <property type="match status" value="1"/>
</dbReference>
<dbReference type="HAMAP" id="MF_01984">
    <property type="entry name" value="ubiX_pad"/>
    <property type="match status" value="1"/>
</dbReference>
<dbReference type="InterPro" id="IPR036551">
    <property type="entry name" value="Flavin_trans-like"/>
</dbReference>
<dbReference type="InterPro" id="IPR003382">
    <property type="entry name" value="Flavoprotein"/>
</dbReference>
<dbReference type="InterPro" id="IPR004507">
    <property type="entry name" value="UbiX-like"/>
</dbReference>
<dbReference type="NCBIfam" id="NF004685">
    <property type="entry name" value="PRK06029.1"/>
    <property type="match status" value="1"/>
</dbReference>
<dbReference type="NCBIfam" id="TIGR00421">
    <property type="entry name" value="ubiX_pad"/>
    <property type="match status" value="1"/>
</dbReference>
<dbReference type="Pfam" id="PF02441">
    <property type="entry name" value="Flavoprotein"/>
    <property type="match status" value="1"/>
</dbReference>
<dbReference type="SUPFAM" id="SSF52507">
    <property type="entry name" value="Homo-oligomeric flavin-containing Cys decarboxylases, HFCD"/>
    <property type="match status" value="1"/>
</dbReference>
<evidence type="ECO:0000255" key="1">
    <source>
        <dbReference type="HAMAP-Rule" id="MF_01984"/>
    </source>
</evidence>
<sequence>MKLVLGISGASGIPLALRFLEKLPKEIEIFVVASKNAHVVALEESNINLKNAMKDLRPSATFFNEQDIHASIASGSYGIHKMAIIPASMDMVAKIAHGFGGDLISRSASVMLKEKRPLLIAPREMPLSAIMLENLLKLAHSNAIIAPPMMTYYTQSKTLEAMQDFLVGKWFDSLGIENDLYPRWGMN</sequence>
<comment type="function">
    <text evidence="1">Flavin prenyltransferase that catalyzes the synthesis of the prenylated FMN cofactor (prenyl-FMN) for 4-hydroxy-3-polyprenylbenzoic acid decarboxylase UbiD. The prenyltransferase is metal-independent and links a dimethylallyl moiety from dimethylallyl monophosphate (DMAP) to the flavin N5 and C6 atoms of FMN.</text>
</comment>
<comment type="catalytic activity">
    <reaction evidence="1">
        <text>dimethylallyl phosphate + FMNH2 = prenylated FMNH2 + phosphate</text>
        <dbReference type="Rhea" id="RHEA:37743"/>
        <dbReference type="ChEBI" id="CHEBI:43474"/>
        <dbReference type="ChEBI" id="CHEBI:57618"/>
        <dbReference type="ChEBI" id="CHEBI:87467"/>
        <dbReference type="ChEBI" id="CHEBI:88052"/>
        <dbReference type="EC" id="2.5.1.129"/>
    </reaction>
</comment>
<comment type="similarity">
    <text evidence="1">Belongs to the UbiX/PAD1 family.</text>
</comment>
<reference key="1">
    <citation type="journal article" date="1999" name="Nature">
        <title>Genomic sequence comparison of two unrelated isolates of the human gastric pathogen Helicobacter pylori.</title>
        <authorList>
            <person name="Alm R.A."/>
            <person name="Ling L.-S.L."/>
            <person name="Moir D.T."/>
            <person name="King B.L."/>
            <person name="Brown E.D."/>
            <person name="Doig P.C."/>
            <person name="Smith D.R."/>
            <person name="Noonan B."/>
            <person name="Guild B.C."/>
            <person name="deJonge B.L."/>
            <person name="Carmel G."/>
            <person name="Tummino P.J."/>
            <person name="Caruso A."/>
            <person name="Uria-Nickelsen M."/>
            <person name="Mills D.M."/>
            <person name="Ives C."/>
            <person name="Gibson R."/>
            <person name="Merberg D."/>
            <person name="Mills S.D."/>
            <person name="Jiang Q."/>
            <person name="Taylor D.E."/>
            <person name="Vovis G.F."/>
            <person name="Trust T.J."/>
        </authorList>
    </citation>
    <scope>NUCLEOTIDE SEQUENCE [LARGE SCALE GENOMIC DNA]</scope>
    <source>
        <strain>J99 / ATCC 700824</strain>
    </source>
</reference>
<proteinExistence type="inferred from homology"/>
<accession>Q9ZJE3</accession>
<keyword id="KW-0285">Flavoprotein</keyword>
<keyword id="KW-0288">FMN</keyword>
<keyword id="KW-0637">Prenyltransferase</keyword>
<keyword id="KW-0808">Transferase</keyword>
<organism>
    <name type="scientific">Helicobacter pylori (strain J99 / ATCC 700824)</name>
    <name type="common">Campylobacter pylori J99</name>
    <dbReference type="NCBI Taxonomy" id="85963"/>
    <lineage>
        <taxon>Bacteria</taxon>
        <taxon>Pseudomonadati</taxon>
        <taxon>Campylobacterota</taxon>
        <taxon>Epsilonproteobacteria</taxon>
        <taxon>Campylobacterales</taxon>
        <taxon>Helicobacteraceae</taxon>
        <taxon>Helicobacter</taxon>
    </lineage>
</organism>
<feature type="chain" id="PRO_0000134967" description="Flavin prenyltransferase UbiX">
    <location>
        <begin position="1"/>
        <end position="187"/>
    </location>
</feature>
<feature type="binding site" evidence="1">
    <location>
        <begin position="9"/>
        <end position="11"/>
    </location>
    <ligand>
        <name>FMN</name>
        <dbReference type="ChEBI" id="CHEBI:58210"/>
    </ligand>
</feature>
<feature type="binding site" evidence="1">
    <location>
        <position position="34"/>
    </location>
    <ligand>
        <name>FMN</name>
        <dbReference type="ChEBI" id="CHEBI:58210"/>
    </ligand>
</feature>
<feature type="binding site" evidence="1">
    <location>
        <position position="123"/>
    </location>
    <ligand>
        <name>FMN</name>
        <dbReference type="ChEBI" id="CHEBI:58210"/>
    </ligand>
</feature>
<feature type="binding site" evidence="1">
    <location>
        <position position="153"/>
    </location>
    <ligand>
        <name>dimethylallyl phosphate</name>
        <dbReference type="ChEBI" id="CHEBI:88052"/>
    </ligand>
</feature>
<feature type="binding site" evidence="1">
    <location>
        <position position="169"/>
    </location>
    <ligand>
        <name>dimethylallyl phosphate</name>
        <dbReference type="ChEBI" id="CHEBI:88052"/>
    </ligand>
</feature>
<gene>
    <name evidence="1" type="primary">ubiX</name>
    <name type="ordered locus">jhp_1369</name>
</gene>
<protein>
    <recommendedName>
        <fullName evidence="1">Flavin prenyltransferase UbiX</fullName>
        <ecNumber evidence="1">2.5.1.129</ecNumber>
    </recommendedName>
</protein>
<name>UBIX_HELPJ</name>